<protein>
    <recommendedName>
        <fullName evidence="4">Iodotyrosine deiodinase</fullName>
        <ecNumber evidence="4">1.21.1.1</ecNumber>
    </recommendedName>
    <alternativeName>
        <fullName evidence="6">Halotyrosine dehalogenase</fullName>
    </alternativeName>
</protein>
<accession>A7S5D9</accession>
<reference evidence="8" key="1">
    <citation type="journal article" date="2007" name="Science">
        <title>Sea anemone genome reveals ancestral eumetazoan gene repertoire and genomic organization.</title>
        <authorList>
            <person name="Putnam N.H."/>
            <person name="Srivastava M."/>
            <person name="Hellsten U."/>
            <person name="Dirks B."/>
            <person name="Chapman J."/>
            <person name="Salamov A."/>
            <person name="Terry A."/>
            <person name="Shapiro H."/>
            <person name="Lindquist E."/>
            <person name="Kapitonov V.V."/>
            <person name="Jurka J."/>
            <person name="Genikhovich G."/>
            <person name="Grigoriev I.V."/>
            <person name="Lucas S.M."/>
            <person name="Steele R.E."/>
            <person name="Finnerty J.R."/>
            <person name="Technau U."/>
            <person name="Martindale M.Q."/>
            <person name="Rokhsar D.S."/>
        </authorList>
    </citation>
    <scope>NUCLEOTIDE SEQUENCE [LARGE SCALE GENOMIC DNA]</scope>
    <source>
        <strain evidence="8">CH2 X CH6</strain>
    </source>
</reference>
<reference evidence="5" key="2">
    <citation type="journal article" date="2014" name="Mol. Biosyst.">
        <title>Iodotyrosine deiodinase: a unique flavoprotein present in organisms of diverse phyla.</title>
        <authorList>
            <person name="Phatarphekar A."/>
            <person name="Buss J.M."/>
            <person name="Rokita S.E."/>
        </authorList>
    </citation>
    <scope>FUNCTION</scope>
    <scope>CATALYTIC ACTIVITY</scope>
    <scope>BIOPHYSICOCHEMICAL PROPERTIES</scope>
    <scope>COFACTOR</scope>
</reference>
<proteinExistence type="evidence at protein level"/>
<name>IYD_NEMVE</name>
<evidence type="ECO:0000250" key="1">
    <source>
        <dbReference type="UniProtKB" id="Q6PHW0"/>
    </source>
</evidence>
<evidence type="ECO:0000250" key="2">
    <source>
        <dbReference type="UniProtKB" id="Q9DCX8"/>
    </source>
</evidence>
<evidence type="ECO:0000269" key="3">
    <source>
    </source>
</evidence>
<evidence type="ECO:0000303" key="4">
    <source>
    </source>
</evidence>
<evidence type="ECO:0000305" key="5"/>
<evidence type="ECO:0000305" key="6">
    <source>
    </source>
</evidence>
<evidence type="ECO:0000312" key="7">
    <source>
        <dbReference type="EMBL" id="EDO41106.1"/>
    </source>
</evidence>
<evidence type="ECO:0000312" key="8">
    <source>
        <dbReference type="Proteomes" id="UP000001593"/>
    </source>
</evidence>
<dbReference type="EC" id="1.21.1.1" evidence="4"/>
<dbReference type="EMBL" id="DS469582">
    <property type="protein sequence ID" value="EDO41106.1"/>
    <property type="molecule type" value="Genomic_DNA"/>
</dbReference>
<dbReference type="RefSeq" id="XP_001633169.1">
    <property type="nucleotide sequence ID" value="XM_001633119.1"/>
</dbReference>
<dbReference type="SMR" id="A7S5D9"/>
<dbReference type="STRING" id="45351.A7S5D9"/>
<dbReference type="EnsemblMetazoa" id="EDO41106">
    <property type="protein sequence ID" value="EDO41106"/>
    <property type="gene ID" value="NEMVEDRAFT_v1g105379"/>
</dbReference>
<dbReference type="KEGG" id="nve:5512833"/>
<dbReference type="eggNOG" id="KOG3936">
    <property type="taxonomic scope" value="Eukaryota"/>
</dbReference>
<dbReference type="HOGENOM" id="CLU_070764_1_0_1"/>
<dbReference type="InParanoid" id="A7S5D9"/>
<dbReference type="OMA" id="GANHQPW"/>
<dbReference type="OrthoDB" id="5980588at2759"/>
<dbReference type="PhylomeDB" id="A7S5D9"/>
<dbReference type="Proteomes" id="UP000001593">
    <property type="component" value="Unassembled WGS sequence"/>
</dbReference>
<dbReference type="GO" id="GO:0005886">
    <property type="term" value="C:plasma membrane"/>
    <property type="evidence" value="ECO:0000318"/>
    <property type="project" value="GO_Central"/>
</dbReference>
<dbReference type="GO" id="GO:0010181">
    <property type="term" value="F:FMN binding"/>
    <property type="evidence" value="ECO:0000314"/>
    <property type="project" value="UniProtKB"/>
</dbReference>
<dbReference type="GO" id="GO:0140616">
    <property type="term" value="F:iodotyrosine deiodinase activity"/>
    <property type="evidence" value="ECO:0000314"/>
    <property type="project" value="UniProtKB"/>
</dbReference>
<dbReference type="GO" id="GO:0016491">
    <property type="term" value="F:oxidoreductase activity"/>
    <property type="evidence" value="ECO:0000318"/>
    <property type="project" value="GO_Central"/>
</dbReference>
<dbReference type="GO" id="GO:0006570">
    <property type="term" value="P:tyrosine metabolic process"/>
    <property type="evidence" value="ECO:0000318"/>
    <property type="project" value="GO_Central"/>
</dbReference>
<dbReference type="CDD" id="cd02144">
    <property type="entry name" value="iodotyrosine_dehalogenase"/>
    <property type="match status" value="1"/>
</dbReference>
<dbReference type="FunFam" id="3.40.109.10:FF:000004">
    <property type="entry name" value="Iodotyrosine deiodinase 1"/>
    <property type="match status" value="1"/>
</dbReference>
<dbReference type="Gene3D" id="3.40.109.10">
    <property type="entry name" value="NADH Oxidase"/>
    <property type="match status" value="1"/>
</dbReference>
<dbReference type="InterPro" id="IPR029479">
    <property type="entry name" value="Nitroreductase"/>
</dbReference>
<dbReference type="InterPro" id="IPR000415">
    <property type="entry name" value="Nitroreductase-like"/>
</dbReference>
<dbReference type="InterPro" id="IPR050627">
    <property type="entry name" value="Nitroreductase/BluB"/>
</dbReference>
<dbReference type="PANTHER" id="PTHR23026:SF90">
    <property type="entry name" value="IODOTYROSINE DEIODINASE 1"/>
    <property type="match status" value="1"/>
</dbReference>
<dbReference type="PANTHER" id="PTHR23026">
    <property type="entry name" value="NADPH NITROREDUCTASE"/>
    <property type="match status" value="1"/>
</dbReference>
<dbReference type="Pfam" id="PF00881">
    <property type="entry name" value="Nitroreductase"/>
    <property type="match status" value="1"/>
</dbReference>
<dbReference type="SUPFAM" id="SSF55469">
    <property type="entry name" value="FMN-dependent nitroreductase-like"/>
    <property type="match status" value="1"/>
</dbReference>
<comment type="function">
    <text evidence="1 3">Catalyzes the dehalogenation of halotyrosines such as 3,5-diiodo-L-tyrosine (PubMed:24153409). Likely to also catalyze the dehalogenation of other halotyrosines such as 3-bromo-L-tyrosine, 3-chloro-L-tyrosine and 3-iodo-L-tyrosine (By similarity).</text>
</comment>
<comment type="catalytic activity">
    <reaction evidence="3">
        <text>2 iodide + L-tyrosine + 2 NADP(+) = 3,5-diiodo-L-tyrosine + 2 NADPH + H(+)</text>
        <dbReference type="Rhea" id="RHEA:32479"/>
        <dbReference type="ChEBI" id="CHEBI:15378"/>
        <dbReference type="ChEBI" id="CHEBI:16382"/>
        <dbReference type="ChEBI" id="CHEBI:57506"/>
        <dbReference type="ChEBI" id="CHEBI:57783"/>
        <dbReference type="ChEBI" id="CHEBI:58315"/>
        <dbReference type="ChEBI" id="CHEBI:58349"/>
        <dbReference type="EC" id="1.21.1.1"/>
    </reaction>
    <physiologicalReaction direction="right-to-left" evidence="3">
        <dbReference type="Rhea" id="RHEA:32481"/>
    </physiologicalReaction>
</comment>
<comment type="catalytic activity">
    <reaction evidence="1">
        <text>iodide + L-tyrosine + NADP(+) = 3-iodo-L-tyrosine + NADPH</text>
        <dbReference type="Rhea" id="RHEA:27453"/>
        <dbReference type="ChEBI" id="CHEBI:16382"/>
        <dbReference type="ChEBI" id="CHEBI:57783"/>
        <dbReference type="ChEBI" id="CHEBI:58315"/>
        <dbReference type="ChEBI" id="CHEBI:58349"/>
        <dbReference type="ChEBI" id="CHEBI:59898"/>
    </reaction>
    <physiologicalReaction direction="right-to-left" evidence="1">
        <dbReference type="Rhea" id="RHEA:27455"/>
    </physiologicalReaction>
</comment>
<comment type="catalytic activity">
    <reaction evidence="3">
        <text>3-iodo-L-tyrosine + iodide + NADP(+) = 3,5-diiodo-L-tyrosine + NADPH + H(+)</text>
        <dbReference type="Rhea" id="RHEA:27457"/>
        <dbReference type="ChEBI" id="CHEBI:15378"/>
        <dbReference type="ChEBI" id="CHEBI:16382"/>
        <dbReference type="ChEBI" id="CHEBI:57506"/>
        <dbReference type="ChEBI" id="CHEBI:57783"/>
        <dbReference type="ChEBI" id="CHEBI:58349"/>
        <dbReference type="ChEBI" id="CHEBI:59898"/>
    </reaction>
    <physiologicalReaction direction="right-to-left" evidence="3">
        <dbReference type="Rhea" id="RHEA:27459"/>
    </physiologicalReaction>
</comment>
<comment type="catalytic activity">
    <reaction evidence="1">
        <text>L-tyrosine + chloride + NADP(+) = 3-chloro-L-tyrosine + NADPH</text>
        <dbReference type="Rhea" id="RHEA:70343"/>
        <dbReference type="ChEBI" id="CHEBI:17996"/>
        <dbReference type="ChEBI" id="CHEBI:57783"/>
        <dbReference type="ChEBI" id="CHEBI:58315"/>
        <dbReference type="ChEBI" id="CHEBI:58349"/>
        <dbReference type="ChEBI" id="CHEBI:189422"/>
    </reaction>
    <physiologicalReaction direction="right-to-left" evidence="1">
        <dbReference type="Rhea" id="RHEA:70345"/>
    </physiologicalReaction>
</comment>
<comment type="catalytic activity">
    <reaction evidence="1">
        <text>bromide + L-tyrosine + NADP(+) = 3-bromo-L-tyrosine + NADPH</text>
        <dbReference type="Rhea" id="RHEA:70347"/>
        <dbReference type="ChEBI" id="CHEBI:15858"/>
        <dbReference type="ChEBI" id="CHEBI:57783"/>
        <dbReference type="ChEBI" id="CHEBI:58315"/>
        <dbReference type="ChEBI" id="CHEBI:58349"/>
        <dbReference type="ChEBI" id="CHEBI:189423"/>
    </reaction>
    <physiologicalReaction direction="right-to-left" evidence="1">
        <dbReference type="Rhea" id="RHEA:70349"/>
    </physiologicalReaction>
</comment>
<comment type="cofactor">
    <cofactor evidence="3">
        <name>FMN</name>
        <dbReference type="ChEBI" id="CHEBI:58210"/>
    </cofactor>
</comment>
<comment type="biophysicochemical properties">
    <kinetics>
        <KM evidence="3">105 uM for diiodotyrosine (L-DIT)</KM>
        <text evidence="3">Kcat 32 min(-1) for the deiodination of diiodotyrosine (L-DIT).</text>
    </kinetics>
</comment>
<comment type="similarity">
    <text evidence="5">Belongs to the nitroreductase family.</text>
</comment>
<feature type="chain" id="PRO_0000455642" description="Iodotyrosine deiodinase">
    <location>
        <begin position="1"/>
        <end position="264"/>
    </location>
</feature>
<feature type="binding site" evidence="1">
    <location>
        <begin position="75"/>
        <end position="79"/>
    </location>
    <ligand>
        <name>FMN</name>
        <dbReference type="ChEBI" id="CHEBI:58210"/>
    </ligand>
</feature>
<feature type="binding site" evidence="2">
    <location>
        <begin position="103"/>
        <end position="104"/>
    </location>
    <ligand>
        <name>FMN</name>
        <dbReference type="ChEBI" id="CHEBI:58210"/>
    </ligand>
</feature>
<feature type="binding site" evidence="1">
    <location>
        <position position="105"/>
    </location>
    <ligand>
        <name>3-iodo-L-tyrosine</name>
        <dbReference type="ChEBI" id="CHEBI:59898"/>
    </ligand>
</feature>
<feature type="binding site" evidence="1">
    <location>
        <position position="132"/>
    </location>
    <ligand>
        <name>3-iodo-L-tyrosine</name>
        <dbReference type="ChEBI" id="CHEBI:59898"/>
    </ligand>
</feature>
<feature type="binding site" evidence="1">
    <location>
        <position position="136"/>
    </location>
    <ligand>
        <name>3-iodo-L-tyrosine</name>
        <dbReference type="ChEBI" id="CHEBI:59898"/>
    </ligand>
</feature>
<feature type="binding site" evidence="1">
    <location>
        <position position="157"/>
    </location>
    <ligand>
        <name>3-iodo-L-tyrosine</name>
        <dbReference type="ChEBI" id="CHEBI:59898"/>
    </ligand>
</feature>
<feature type="binding site" evidence="1">
    <location>
        <begin position="212"/>
        <end position="214"/>
    </location>
    <ligand>
        <name>FMN</name>
        <dbReference type="ChEBI" id="CHEBI:58210"/>
    </ligand>
</feature>
<feature type="binding site" evidence="1">
    <location>
        <position position="254"/>
    </location>
    <ligand>
        <name>FMN</name>
        <dbReference type="ChEBI" id="CHEBI:58210"/>
    </ligand>
</feature>
<keyword id="KW-0285">Flavoprotein</keyword>
<keyword id="KW-0288">FMN</keyword>
<keyword id="KW-0521">NADP</keyword>
<keyword id="KW-0560">Oxidoreductase</keyword>
<keyword id="KW-1185">Reference proteome</keyword>
<sequence length="264" mass="30275">MEVFKALFKSKEAYTVDVDPMKDSDEHDLPRDPLSIRVTGEEEVNHIPYPYFDEIPTEEEMKKKSAEFYKSMKKRRTVRKISSEPVPLEVIENIVRVAGTSPSGAHTEPWTYVVIRDPDLKKQIKEVVEEEEQLNYARRMGEKWVQDLSILKTTWSKPYIETAPYLILIFKQVYGIKPDGDKKVHYYNEISVCISCGLLLAAIQNAGLVTVTSTPMNAGPRLRVLLNRPQNEKLIMLLPVGYPAKDAEVPNLTRKPLEEIMVLK</sequence>
<gene>
    <name evidence="7" type="ORF">v1g105379</name>
</gene>
<organism evidence="8">
    <name type="scientific">Nematostella vectensis</name>
    <name type="common">Starlet sea anemone</name>
    <dbReference type="NCBI Taxonomy" id="45351"/>
    <lineage>
        <taxon>Eukaryota</taxon>
        <taxon>Metazoa</taxon>
        <taxon>Cnidaria</taxon>
        <taxon>Anthozoa</taxon>
        <taxon>Hexacorallia</taxon>
        <taxon>Actiniaria</taxon>
        <taxon>Edwardsiidae</taxon>
        <taxon>Nematostella</taxon>
    </lineage>
</organism>